<organism>
    <name type="scientific">Shouchella clausii (strain KSM-K16)</name>
    <name type="common">Alkalihalobacillus clausii</name>
    <dbReference type="NCBI Taxonomy" id="66692"/>
    <lineage>
        <taxon>Bacteria</taxon>
        <taxon>Bacillati</taxon>
        <taxon>Bacillota</taxon>
        <taxon>Bacilli</taxon>
        <taxon>Bacillales</taxon>
        <taxon>Bacillaceae</taxon>
        <taxon>Shouchella</taxon>
    </lineage>
</organism>
<evidence type="ECO:0000255" key="1">
    <source>
        <dbReference type="HAMAP-Rule" id="MF_00168"/>
    </source>
</evidence>
<keyword id="KW-0328">Glycosyltransferase</keyword>
<keyword id="KW-0479">Metal-binding</keyword>
<keyword id="KW-0671">Queuosine biosynthesis</keyword>
<keyword id="KW-1185">Reference proteome</keyword>
<keyword id="KW-0808">Transferase</keyword>
<keyword id="KW-0819">tRNA processing</keyword>
<keyword id="KW-0862">Zinc</keyword>
<accession>Q5WHR2</accession>
<name>TGT_SHOC1</name>
<dbReference type="EC" id="2.4.2.29" evidence="1"/>
<dbReference type="EMBL" id="AP006627">
    <property type="protein sequence ID" value="BAD64093.1"/>
    <property type="molecule type" value="Genomic_DNA"/>
</dbReference>
<dbReference type="RefSeq" id="WP_011246402.1">
    <property type="nucleotide sequence ID" value="NC_006582.1"/>
</dbReference>
<dbReference type="SMR" id="Q5WHR2"/>
<dbReference type="STRING" id="66692.ABC1558"/>
<dbReference type="KEGG" id="bcl:ABC1558"/>
<dbReference type="eggNOG" id="COG0343">
    <property type="taxonomic scope" value="Bacteria"/>
</dbReference>
<dbReference type="HOGENOM" id="CLU_022060_0_1_9"/>
<dbReference type="OrthoDB" id="9805417at2"/>
<dbReference type="UniPathway" id="UPA00392"/>
<dbReference type="Proteomes" id="UP000001168">
    <property type="component" value="Chromosome"/>
</dbReference>
<dbReference type="GO" id="GO:0005829">
    <property type="term" value="C:cytosol"/>
    <property type="evidence" value="ECO:0007669"/>
    <property type="project" value="TreeGrafter"/>
</dbReference>
<dbReference type="GO" id="GO:0046872">
    <property type="term" value="F:metal ion binding"/>
    <property type="evidence" value="ECO:0007669"/>
    <property type="project" value="UniProtKB-KW"/>
</dbReference>
<dbReference type="GO" id="GO:0008479">
    <property type="term" value="F:tRNA-guanosine(34) queuine transglycosylase activity"/>
    <property type="evidence" value="ECO:0007669"/>
    <property type="project" value="UniProtKB-UniRule"/>
</dbReference>
<dbReference type="GO" id="GO:0008616">
    <property type="term" value="P:queuosine biosynthetic process"/>
    <property type="evidence" value="ECO:0007669"/>
    <property type="project" value="UniProtKB-UniRule"/>
</dbReference>
<dbReference type="GO" id="GO:0002099">
    <property type="term" value="P:tRNA wobble guanine modification"/>
    <property type="evidence" value="ECO:0007669"/>
    <property type="project" value="TreeGrafter"/>
</dbReference>
<dbReference type="GO" id="GO:0101030">
    <property type="term" value="P:tRNA-guanine transglycosylation"/>
    <property type="evidence" value="ECO:0007669"/>
    <property type="project" value="InterPro"/>
</dbReference>
<dbReference type="FunFam" id="3.20.20.105:FF:000001">
    <property type="entry name" value="Queuine tRNA-ribosyltransferase"/>
    <property type="match status" value="1"/>
</dbReference>
<dbReference type="Gene3D" id="3.20.20.105">
    <property type="entry name" value="Queuine tRNA-ribosyltransferase-like"/>
    <property type="match status" value="1"/>
</dbReference>
<dbReference type="HAMAP" id="MF_00168">
    <property type="entry name" value="Q_tRNA_Tgt"/>
    <property type="match status" value="1"/>
</dbReference>
<dbReference type="InterPro" id="IPR050076">
    <property type="entry name" value="ArchSynthase1/Queuine_TRR"/>
</dbReference>
<dbReference type="InterPro" id="IPR004803">
    <property type="entry name" value="TGT"/>
</dbReference>
<dbReference type="InterPro" id="IPR036511">
    <property type="entry name" value="TGT-like_sf"/>
</dbReference>
<dbReference type="InterPro" id="IPR002616">
    <property type="entry name" value="tRNA_ribo_trans-like"/>
</dbReference>
<dbReference type="NCBIfam" id="TIGR00430">
    <property type="entry name" value="Q_tRNA_tgt"/>
    <property type="match status" value="1"/>
</dbReference>
<dbReference type="NCBIfam" id="TIGR00449">
    <property type="entry name" value="tgt_general"/>
    <property type="match status" value="1"/>
</dbReference>
<dbReference type="PANTHER" id="PTHR46499">
    <property type="entry name" value="QUEUINE TRNA-RIBOSYLTRANSFERASE"/>
    <property type="match status" value="1"/>
</dbReference>
<dbReference type="PANTHER" id="PTHR46499:SF1">
    <property type="entry name" value="QUEUINE TRNA-RIBOSYLTRANSFERASE"/>
    <property type="match status" value="1"/>
</dbReference>
<dbReference type="Pfam" id="PF01702">
    <property type="entry name" value="TGT"/>
    <property type="match status" value="1"/>
</dbReference>
<dbReference type="SUPFAM" id="SSF51713">
    <property type="entry name" value="tRNA-guanine transglycosylase"/>
    <property type="match status" value="1"/>
</dbReference>
<feature type="chain" id="PRO_0000135451" description="Queuine tRNA-ribosyltransferase">
    <location>
        <begin position="1"/>
        <end position="383"/>
    </location>
</feature>
<feature type="region of interest" description="RNA binding" evidence="1">
    <location>
        <begin position="253"/>
        <end position="259"/>
    </location>
</feature>
<feature type="region of interest" description="RNA binding; important for wobble base 34 recognition" evidence="1">
    <location>
        <begin position="277"/>
        <end position="281"/>
    </location>
</feature>
<feature type="active site" description="Proton acceptor" evidence="1">
    <location>
        <position position="95"/>
    </location>
</feature>
<feature type="active site" description="Nucleophile" evidence="1">
    <location>
        <position position="272"/>
    </location>
</feature>
<feature type="binding site" evidence="1">
    <location>
        <begin position="95"/>
        <end position="99"/>
    </location>
    <ligand>
        <name>substrate</name>
    </ligand>
</feature>
<feature type="binding site" evidence="1">
    <location>
        <position position="149"/>
    </location>
    <ligand>
        <name>substrate</name>
    </ligand>
</feature>
<feature type="binding site" evidence="1">
    <location>
        <position position="195"/>
    </location>
    <ligand>
        <name>substrate</name>
    </ligand>
</feature>
<feature type="binding site" evidence="1">
    <location>
        <position position="222"/>
    </location>
    <ligand>
        <name>substrate</name>
    </ligand>
</feature>
<feature type="binding site" evidence="1">
    <location>
        <position position="310"/>
    </location>
    <ligand>
        <name>Zn(2+)</name>
        <dbReference type="ChEBI" id="CHEBI:29105"/>
    </ligand>
</feature>
<feature type="binding site" evidence="1">
    <location>
        <position position="312"/>
    </location>
    <ligand>
        <name>Zn(2+)</name>
        <dbReference type="ChEBI" id="CHEBI:29105"/>
    </ligand>
</feature>
<feature type="binding site" evidence="1">
    <location>
        <position position="315"/>
    </location>
    <ligand>
        <name>Zn(2+)</name>
        <dbReference type="ChEBI" id="CHEBI:29105"/>
    </ligand>
</feature>
<feature type="binding site" evidence="1">
    <location>
        <position position="341"/>
    </location>
    <ligand>
        <name>Zn(2+)</name>
        <dbReference type="ChEBI" id="CHEBI:29105"/>
    </ligand>
</feature>
<comment type="function">
    <text evidence="1">Catalyzes the base-exchange of a guanine (G) residue with the queuine precursor 7-aminomethyl-7-deazaguanine (PreQ1) at position 34 (anticodon wobble position) in tRNAs with GU(N) anticodons (tRNA-Asp, -Asn, -His and -Tyr). Catalysis occurs through a double-displacement mechanism. The nucleophile active site attacks the C1' of nucleotide 34 to detach the guanine base from the RNA, forming a covalent enzyme-RNA intermediate. The proton acceptor active site deprotonates the incoming PreQ1, allowing a nucleophilic attack on the C1' of the ribose to form the product. After dissociation, two additional enzymatic reactions on the tRNA convert PreQ1 to queuine (Q), resulting in the hypermodified nucleoside queuosine (7-(((4,5-cis-dihydroxy-2-cyclopenten-1-yl)amino)methyl)-7-deazaguanosine).</text>
</comment>
<comment type="catalytic activity">
    <reaction evidence="1">
        <text>7-aminomethyl-7-carbaguanine + guanosine(34) in tRNA = 7-aminomethyl-7-carbaguanosine(34) in tRNA + guanine</text>
        <dbReference type="Rhea" id="RHEA:24104"/>
        <dbReference type="Rhea" id="RHEA-COMP:10341"/>
        <dbReference type="Rhea" id="RHEA-COMP:10342"/>
        <dbReference type="ChEBI" id="CHEBI:16235"/>
        <dbReference type="ChEBI" id="CHEBI:58703"/>
        <dbReference type="ChEBI" id="CHEBI:74269"/>
        <dbReference type="ChEBI" id="CHEBI:82833"/>
        <dbReference type="EC" id="2.4.2.29"/>
    </reaction>
</comment>
<comment type="cofactor">
    <cofactor evidence="1">
        <name>Zn(2+)</name>
        <dbReference type="ChEBI" id="CHEBI:29105"/>
    </cofactor>
    <text evidence="1">Binds 1 zinc ion per subunit.</text>
</comment>
<comment type="pathway">
    <text evidence="1">tRNA modification; tRNA-queuosine biosynthesis.</text>
</comment>
<comment type="subunit">
    <text evidence="1">Homodimer. Within each dimer, one monomer is responsible for RNA recognition and catalysis, while the other monomer binds to the replacement base PreQ1.</text>
</comment>
<comment type="similarity">
    <text evidence="1">Belongs to the queuine tRNA-ribosyltransferase family.</text>
</comment>
<sequence length="383" mass="43432">MTAAITYEHIKTCKQSGARLGRVHTPHGTIETPMFMPVGTLATVKTMSPEDLKAMDAQIILSNTYHLWLRPGEEIIKEAGGLHQFMNWDKPILTDSGGFQVFSLSDLRKITEEGVHFRNHLSGEKLFLSPEKAMQIQHVLGSDIMMAFDECPPYPADHSYMKASVERTSRWAERCLAEHKRSGKDSVQGLFGIIQGGEYEDLRKQSANDLTALDFPGYAVGGLSVGEPKDVMNHVLEFTTPLMPEDKPRYLMGVGSPDSLIDGAIRGIDMFDCVLPTRIARNGTCMTSAGRLVVRNAKYARDFSPLDEKCDCHVCRTYSRAYIRHLIKCEETFGFRLTTYHNLYFLLNLMKQVRQAIMDDCLLDFREQFFEEYGFNKENARNF</sequence>
<reference key="1">
    <citation type="submission" date="2003-10" db="EMBL/GenBank/DDBJ databases">
        <title>The complete genome sequence of the alkaliphilic Bacillus clausii KSM-K16.</title>
        <authorList>
            <person name="Takaki Y."/>
            <person name="Kageyama Y."/>
            <person name="Shimamura S."/>
            <person name="Suzuki H."/>
            <person name="Nishi S."/>
            <person name="Hatada Y."/>
            <person name="Kawai S."/>
            <person name="Ito S."/>
            <person name="Horikoshi K."/>
        </authorList>
    </citation>
    <scope>NUCLEOTIDE SEQUENCE [LARGE SCALE GENOMIC DNA]</scope>
    <source>
        <strain>KSM-K16</strain>
    </source>
</reference>
<proteinExistence type="inferred from homology"/>
<protein>
    <recommendedName>
        <fullName evidence="1">Queuine tRNA-ribosyltransferase</fullName>
        <ecNumber evidence="1">2.4.2.29</ecNumber>
    </recommendedName>
    <alternativeName>
        <fullName evidence="1">Guanine insertion enzyme</fullName>
    </alternativeName>
    <alternativeName>
        <fullName evidence="1">tRNA-guanine transglycosylase</fullName>
    </alternativeName>
</protein>
<gene>
    <name evidence="1" type="primary">tgt</name>
    <name type="ordered locus">ABC1558</name>
</gene>